<proteinExistence type="inferred from homology"/>
<comment type="catalytic activity">
    <reaction evidence="1">
        <text>5-amino-1-(5-phospho-D-ribosyl)imidazole-4-carboxylate + L-aspartate + ATP = (2S)-2-[5-amino-1-(5-phospho-beta-D-ribosyl)imidazole-4-carboxamido]succinate + ADP + phosphate + 2 H(+)</text>
        <dbReference type="Rhea" id="RHEA:22628"/>
        <dbReference type="ChEBI" id="CHEBI:15378"/>
        <dbReference type="ChEBI" id="CHEBI:29991"/>
        <dbReference type="ChEBI" id="CHEBI:30616"/>
        <dbReference type="ChEBI" id="CHEBI:43474"/>
        <dbReference type="ChEBI" id="CHEBI:58443"/>
        <dbReference type="ChEBI" id="CHEBI:77657"/>
        <dbReference type="ChEBI" id="CHEBI:456216"/>
        <dbReference type="EC" id="6.3.2.6"/>
    </reaction>
</comment>
<comment type="pathway">
    <text evidence="1">Purine metabolism; IMP biosynthesis via de novo pathway; 5-amino-1-(5-phospho-D-ribosyl)imidazole-4-carboxamide from 5-amino-1-(5-phospho-D-ribosyl)imidazole-4-carboxylate: step 1/2.</text>
</comment>
<comment type="similarity">
    <text evidence="1">Belongs to the SAICAR synthetase family.</text>
</comment>
<dbReference type="EC" id="6.3.2.6" evidence="1"/>
<dbReference type="EMBL" id="CP000544">
    <property type="protein sequence ID" value="ABM61692.1"/>
    <property type="molecule type" value="Genomic_DNA"/>
</dbReference>
<dbReference type="RefSeq" id="WP_011813715.1">
    <property type="nucleotide sequence ID" value="NC_008789.1"/>
</dbReference>
<dbReference type="SMR" id="A1WVI0"/>
<dbReference type="STRING" id="349124.Hhal_0916"/>
<dbReference type="KEGG" id="hha:Hhal_0916"/>
<dbReference type="eggNOG" id="COG0152">
    <property type="taxonomic scope" value="Bacteria"/>
</dbReference>
<dbReference type="HOGENOM" id="CLU_045637_0_0_6"/>
<dbReference type="OrthoDB" id="9801549at2"/>
<dbReference type="UniPathway" id="UPA00074">
    <property type="reaction ID" value="UER00131"/>
</dbReference>
<dbReference type="Proteomes" id="UP000000647">
    <property type="component" value="Chromosome"/>
</dbReference>
<dbReference type="GO" id="GO:0005737">
    <property type="term" value="C:cytoplasm"/>
    <property type="evidence" value="ECO:0007669"/>
    <property type="project" value="TreeGrafter"/>
</dbReference>
<dbReference type="GO" id="GO:0005524">
    <property type="term" value="F:ATP binding"/>
    <property type="evidence" value="ECO:0007669"/>
    <property type="project" value="UniProtKB-KW"/>
</dbReference>
<dbReference type="GO" id="GO:0004639">
    <property type="term" value="F:phosphoribosylaminoimidazolesuccinocarboxamide synthase activity"/>
    <property type="evidence" value="ECO:0007669"/>
    <property type="project" value="UniProtKB-UniRule"/>
</dbReference>
<dbReference type="GO" id="GO:0006189">
    <property type="term" value="P:'de novo' IMP biosynthetic process"/>
    <property type="evidence" value="ECO:0007669"/>
    <property type="project" value="UniProtKB-UniRule"/>
</dbReference>
<dbReference type="CDD" id="cd01414">
    <property type="entry name" value="SAICAR_synt_Sc"/>
    <property type="match status" value="1"/>
</dbReference>
<dbReference type="FunFam" id="3.30.470.20:FF:000015">
    <property type="entry name" value="Phosphoribosylaminoimidazole-succinocarboxamide synthase"/>
    <property type="match status" value="1"/>
</dbReference>
<dbReference type="Gene3D" id="3.30.470.20">
    <property type="entry name" value="ATP-grasp fold, B domain"/>
    <property type="match status" value="1"/>
</dbReference>
<dbReference type="Gene3D" id="3.30.200.20">
    <property type="entry name" value="Phosphorylase Kinase, domain 1"/>
    <property type="match status" value="1"/>
</dbReference>
<dbReference type="HAMAP" id="MF_00137">
    <property type="entry name" value="SAICAR_synth"/>
    <property type="match status" value="1"/>
</dbReference>
<dbReference type="InterPro" id="IPR028923">
    <property type="entry name" value="SAICAR_synt/ADE2_N"/>
</dbReference>
<dbReference type="InterPro" id="IPR001636">
    <property type="entry name" value="SAICAR_synth"/>
</dbReference>
<dbReference type="InterPro" id="IPR018236">
    <property type="entry name" value="SAICAR_synthetase_CS"/>
</dbReference>
<dbReference type="NCBIfam" id="NF010568">
    <property type="entry name" value="PRK13961.1"/>
    <property type="match status" value="1"/>
</dbReference>
<dbReference type="NCBIfam" id="TIGR00081">
    <property type="entry name" value="purC"/>
    <property type="match status" value="1"/>
</dbReference>
<dbReference type="PANTHER" id="PTHR43700">
    <property type="entry name" value="PHOSPHORIBOSYLAMINOIMIDAZOLE-SUCCINOCARBOXAMIDE SYNTHASE"/>
    <property type="match status" value="1"/>
</dbReference>
<dbReference type="PANTHER" id="PTHR43700:SF1">
    <property type="entry name" value="PHOSPHORIBOSYLAMINOIMIDAZOLE-SUCCINOCARBOXAMIDE SYNTHASE"/>
    <property type="match status" value="1"/>
</dbReference>
<dbReference type="Pfam" id="PF01259">
    <property type="entry name" value="SAICAR_synt"/>
    <property type="match status" value="1"/>
</dbReference>
<dbReference type="SUPFAM" id="SSF56104">
    <property type="entry name" value="SAICAR synthase-like"/>
    <property type="match status" value="1"/>
</dbReference>
<dbReference type="PROSITE" id="PS01057">
    <property type="entry name" value="SAICAR_SYNTHETASE_1"/>
    <property type="match status" value="1"/>
</dbReference>
<dbReference type="PROSITE" id="PS01058">
    <property type="entry name" value="SAICAR_SYNTHETASE_2"/>
    <property type="match status" value="1"/>
</dbReference>
<accession>A1WVI0</accession>
<protein>
    <recommendedName>
        <fullName evidence="1">Phosphoribosylaminoimidazole-succinocarboxamide synthase</fullName>
        <ecNumber evidence="1">6.3.2.6</ecNumber>
    </recommendedName>
    <alternativeName>
        <fullName evidence="1">SAICAR synthetase</fullName>
    </alternativeName>
</protein>
<sequence length="295" mass="32632">MTASTPVAQTHIQSLPLLHSGKVRDIYAVDDERLLIVATDRLSAFDVILPDPIPDKGAVLTRVSNFWFRKTAHLAANHLLDTPPESVVAPEEADQVRDRGVVVRRLQALPVEAIVRGYLAGSGWQSYQRDGTVSGVALPDGLRQSDRLPEPIFTPTTKAAVGDHDEPISFAQTVERIGADLAERIRTIALEVFALATEYAESRGLIIADTKLEFGVTPEGEPVIIDELLTPDSSRFWPADAWQPGATPPAFDKQYIRDHLEALGWDKRPPAPHLTDDVIRQTAEKYREAERLLTR</sequence>
<reference key="1">
    <citation type="submission" date="2006-12" db="EMBL/GenBank/DDBJ databases">
        <title>Complete sequence of Halorhodospira halophila SL1.</title>
        <authorList>
            <consortium name="US DOE Joint Genome Institute"/>
            <person name="Copeland A."/>
            <person name="Lucas S."/>
            <person name="Lapidus A."/>
            <person name="Barry K."/>
            <person name="Detter J.C."/>
            <person name="Glavina del Rio T."/>
            <person name="Hammon N."/>
            <person name="Israni S."/>
            <person name="Dalin E."/>
            <person name="Tice H."/>
            <person name="Pitluck S."/>
            <person name="Saunders E."/>
            <person name="Brettin T."/>
            <person name="Bruce D."/>
            <person name="Han C."/>
            <person name="Tapia R."/>
            <person name="Schmutz J."/>
            <person name="Larimer F."/>
            <person name="Land M."/>
            <person name="Hauser L."/>
            <person name="Kyrpides N."/>
            <person name="Mikhailova N."/>
            <person name="Hoff W."/>
            <person name="Richardson P."/>
        </authorList>
    </citation>
    <scope>NUCLEOTIDE SEQUENCE [LARGE SCALE GENOMIC DNA]</scope>
    <source>
        <strain>DSM 244 / SL1</strain>
    </source>
</reference>
<organism>
    <name type="scientific">Halorhodospira halophila (strain DSM 244 / SL1)</name>
    <name type="common">Ectothiorhodospira halophila (strain DSM 244 / SL1)</name>
    <dbReference type="NCBI Taxonomy" id="349124"/>
    <lineage>
        <taxon>Bacteria</taxon>
        <taxon>Pseudomonadati</taxon>
        <taxon>Pseudomonadota</taxon>
        <taxon>Gammaproteobacteria</taxon>
        <taxon>Chromatiales</taxon>
        <taxon>Ectothiorhodospiraceae</taxon>
        <taxon>Halorhodospira</taxon>
    </lineage>
</organism>
<name>PUR7_HALHL</name>
<evidence type="ECO:0000255" key="1">
    <source>
        <dbReference type="HAMAP-Rule" id="MF_00137"/>
    </source>
</evidence>
<gene>
    <name evidence="1" type="primary">purC</name>
    <name type="ordered locus">Hhal_0916</name>
</gene>
<feature type="chain" id="PRO_1000018713" description="Phosphoribosylaminoimidazole-succinocarboxamide synthase">
    <location>
        <begin position="1"/>
        <end position="295"/>
    </location>
</feature>
<keyword id="KW-0067">ATP-binding</keyword>
<keyword id="KW-0436">Ligase</keyword>
<keyword id="KW-0547">Nucleotide-binding</keyword>
<keyword id="KW-0658">Purine biosynthesis</keyword>
<keyword id="KW-1185">Reference proteome</keyword>